<reference key="1">
    <citation type="journal article" date="2001" name="J. Bacteriol.">
        <title>Genome sequence and comparative analysis of the solvent-producing bacterium Clostridium acetobutylicum.</title>
        <authorList>
            <person name="Noelling J."/>
            <person name="Breton G."/>
            <person name="Omelchenko M.V."/>
            <person name="Makarova K.S."/>
            <person name="Zeng Q."/>
            <person name="Gibson R."/>
            <person name="Lee H.M."/>
            <person name="Dubois J."/>
            <person name="Qiu D."/>
            <person name="Hitti J."/>
            <person name="Wolf Y.I."/>
            <person name="Tatusov R.L."/>
            <person name="Sabathe F."/>
            <person name="Doucette-Stamm L.A."/>
            <person name="Soucaille P."/>
            <person name="Daly M.J."/>
            <person name="Bennett G.N."/>
            <person name="Koonin E.V."/>
            <person name="Smith D.R."/>
        </authorList>
    </citation>
    <scope>NUCLEOTIDE SEQUENCE [LARGE SCALE GENOMIC DNA]</scope>
    <source>
        <strain>ATCC 824 / DSM 792 / JCM 1419 / IAM 19013 / LMG 5710 / NBRC 13948 / NRRL B-527 / VKM B-1787 / 2291 / W</strain>
    </source>
</reference>
<comment type="catalytic activity">
    <reaction>
        <text>(2R)-O-phospho-3-sulfolactate + H2O = (2R)-3-sulfolactate + phosphate</text>
        <dbReference type="Rhea" id="RHEA:23416"/>
        <dbReference type="ChEBI" id="CHEBI:15377"/>
        <dbReference type="ChEBI" id="CHEBI:15597"/>
        <dbReference type="ChEBI" id="CHEBI:43474"/>
        <dbReference type="ChEBI" id="CHEBI:58738"/>
        <dbReference type="EC" id="3.1.3.71"/>
    </reaction>
</comment>
<comment type="cofactor">
    <cofactor evidence="1">
        <name>Mg(2+)</name>
        <dbReference type="ChEBI" id="CHEBI:18420"/>
    </cofactor>
</comment>
<comment type="similarity">
    <text evidence="2">Belongs to the ComB family.</text>
</comment>
<organism>
    <name type="scientific">Clostridium acetobutylicum (strain ATCC 824 / DSM 792 / JCM 1419 / IAM 19013 / LMG 5710 / NBRC 13948 / NRRL B-527 / VKM B-1787 / 2291 / W)</name>
    <dbReference type="NCBI Taxonomy" id="272562"/>
    <lineage>
        <taxon>Bacteria</taxon>
        <taxon>Bacillati</taxon>
        <taxon>Bacillota</taxon>
        <taxon>Clostridia</taxon>
        <taxon>Eubacteriales</taxon>
        <taxon>Clostridiaceae</taxon>
        <taxon>Clostridium</taxon>
    </lineage>
</organism>
<feature type="chain" id="PRO_0000081465" description="Probable 2-phosphosulfolactate phosphatase">
    <location>
        <begin position="1"/>
        <end position="235"/>
    </location>
</feature>
<feature type="strand" evidence="3">
    <location>
        <begin position="1"/>
        <end position="6"/>
    </location>
</feature>
<feature type="helix" evidence="3">
    <location>
        <begin position="9"/>
        <end position="11"/>
    </location>
</feature>
<feature type="helix" evidence="3">
    <location>
        <begin position="14"/>
        <end position="16"/>
    </location>
</feature>
<feature type="turn" evidence="3">
    <location>
        <begin position="17"/>
        <end position="19"/>
    </location>
</feature>
<feature type="strand" evidence="3">
    <location>
        <begin position="20"/>
        <end position="25"/>
    </location>
</feature>
<feature type="turn" evidence="3">
    <location>
        <begin position="27"/>
        <end position="29"/>
    </location>
</feature>
<feature type="helix" evidence="3">
    <location>
        <begin position="30"/>
        <end position="39"/>
    </location>
</feature>
<feature type="strand" evidence="3">
    <location>
        <begin position="44"/>
        <end position="47"/>
    </location>
</feature>
<feature type="helix" evidence="3">
    <location>
        <begin position="51"/>
        <end position="61"/>
    </location>
</feature>
<feature type="helix" evidence="3">
    <location>
        <begin position="62"/>
        <end position="64"/>
    </location>
</feature>
<feature type="strand" evidence="3">
    <location>
        <begin position="65"/>
        <end position="69"/>
    </location>
</feature>
<feature type="helix" evidence="3">
    <location>
        <begin position="85"/>
        <end position="87"/>
    </location>
</feature>
<feature type="helix" evidence="3">
    <location>
        <begin position="90"/>
        <end position="93"/>
    </location>
</feature>
<feature type="strand" evidence="3">
    <location>
        <begin position="97"/>
        <end position="101"/>
    </location>
</feature>
<feature type="helix" evidence="3">
    <location>
        <begin position="105"/>
        <end position="111"/>
    </location>
</feature>
<feature type="turn" evidence="3">
    <location>
        <begin position="112"/>
        <end position="114"/>
    </location>
</feature>
<feature type="strand" evidence="3">
    <location>
        <begin position="115"/>
        <end position="121"/>
    </location>
</feature>
<feature type="helix" evidence="3">
    <location>
        <begin position="126"/>
        <end position="136"/>
    </location>
</feature>
<feature type="strand" evidence="3">
    <location>
        <begin position="140"/>
        <end position="144"/>
    </location>
</feature>
<feature type="helix" evidence="3">
    <location>
        <begin position="153"/>
        <end position="169"/>
    </location>
</feature>
<feature type="strand" evidence="3">
    <location>
        <begin position="173"/>
        <end position="175"/>
    </location>
</feature>
<feature type="helix" evidence="3">
    <location>
        <begin position="177"/>
        <end position="187"/>
    </location>
</feature>
<feature type="helix" evidence="3">
    <location>
        <begin position="193"/>
        <end position="196"/>
    </location>
</feature>
<feature type="helix" evidence="3">
    <location>
        <begin position="200"/>
        <end position="207"/>
    </location>
</feature>
<feature type="helix" evidence="3">
    <location>
        <begin position="211"/>
        <end position="217"/>
    </location>
</feature>
<feature type="strand" evidence="3">
    <location>
        <begin position="228"/>
        <end position="230"/>
    </location>
</feature>
<feature type="strand" evidence="3">
    <location>
        <begin position="233"/>
        <end position="235"/>
    </location>
</feature>
<keyword id="KW-0002">3D-structure</keyword>
<keyword id="KW-0378">Hydrolase</keyword>
<keyword id="KW-0460">Magnesium</keyword>
<keyword id="KW-1185">Reference proteome</keyword>
<dbReference type="EC" id="3.1.3.71"/>
<dbReference type="EMBL" id="AE001437">
    <property type="protein sequence ID" value="AAK81168.1"/>
    <property type="molecule type" value="Genomic_DNA"/>
</dbReference>
<dbReference type="PIR" id="E97297">
    <property type="entry name" value="E97297"/>
</dbReference>
<dbReference type="RefSeq" id="NP_349828.1">
    <property type="nucleotide sequence ID" value="NC_003030.1"/>
</dbReference>
<dbReference type="RefSeq" id="WP_010966508.1">
    <property type="nucleotide sequence ID" value="NC_003030.1"/>
</dbReference>
<dbReference type="PDB" id="1VR0">
    <property type="method" value="X-ray"/>
    <property type="resolution" value="2.49 A"/>
    <property type="chains" value="A/B/C=1-235"/>
</dbReference>
<dbReference type="PDBsum" id="1VR0"/>
<dbReference type="SMR" id="Q97E82"/>
<dbReference type="STRING" id="272562.CA_C3233"/>
<dbReference type="DrugBank" id="DB02334">
    <property type="generic name" value="(R)-2-Hydroxy-3-Sulfopropanoic Acid"/>
</dbReference>
<dbReference type="KEGG" id="cac:CA_C3233"/>
<dbReference type="PATRIC" id="fig|272562.8.peg.3411"/>
<dbReference type="eggNOG" id="COG2045">
    <property type="taxonomic scope" value="Bacteria"/>
</dbReference>
<dbReference type="HOGENOM" id="CLU_070028_0_0_9"/>
<dbReference type="OrthoDB" id="4913at2"/>
<dbReference type="BRENDA" id="3.1.3.71">
    <property type="organism ID" value="1452"/>
</dbReference>
<dbReference type="EvolutionaryTrace" id="Q97E82"/>
<dbReference type="Proteomes" id="UP000000814">
    <property type="component" value="Chromosome"/>
</dbReference>
<dbReference type="GO" id="GO:0050532">
    <property type="term" value="F:2-phosphosulfolactate phosphatase activity"/>
    <property type="evidence" value="ECO:0007669"/>
    <property type="project" value="UniProtKB-UniRule"/>
</dbReference>
<dbReference type="GO" id="GO:0000287">
    <property type="term" value="F:magnesium ion binding"/>
    <property type="evidence" value="ECO:0007669"/>
    <property type="project" value="UniProtKB-UniRule"/>
</dbReference>
<dbReference type="GO" id="GO:0050545">
    <property type="term" value="F:sulfopyruvate decarboxylase activity"/>
    <property type="evidence" value="ECO:0007669"/>
    <property type="project" value="TreeGrafter"/>
</dbReference>
<dbReference type="FunFam" id="3.90.1560.10:FF:000001">
    <property type="entry name" value="Probable 2-phosphosulfolactate phosphatase"/>
    <property type="match status" value="1"/>
</dbReference>
<dbReference type="Gene3D" id="3.90.1560.10">
    <property type="entry name" value="ComB-like"/>
    <property type="match status" value="1"/>
</dbReference>
<dbReference type="HAMAP" id="MF_00490">
    <property type="entry name" value="ComB"/>
    <property type="match status" value="1"/>
</dbReference>
<dbReference type="InterPro" id="IPR005238">
    <property type="entry name" value="ComB-like"/>
</dbReference>
<dbReference type="InterPro" id="IPR036702">
    <property type="entry name" value="ComB-like_sf"/>
</dbReference>
<dbReference type="NCBIfam" id="NF002055">
    <property type="entry name" value="PRK00886.1-4"/>
    <property type="match status" value="1"/>
</dbReference>
<dbReference type="PANTHER" id="PTHR37311">
    <property type="entry name" value="2-PHOSPHOSULFOLACTATE PHOSPHATASE-RELATED"/>
    <property type="match status" value="1"/>
</dbReference>
<dbReference type="PANTHER" id="PTHR37311:SF1">
    <property type="entry name" value="2-PHOSPHOSULFOLACTATE PHOSPHATASE-RELATED"/>
    <property type="match status" value="1"/>
</dbReference>
<dbReference type="Pfam" id="PF04029">
    <property type="entry name" value="2-ph_phosp"/>
    <property type="match status" value="1"/>
</dbReference>
<dbReference type="SUPFAM" id="SSF142823">
    <property type="entry name" value="ComB-like"/>
    <property type="match status" value="1"/>
</dbReference>
<gene>
    <name type="primary">comB</name>
    <name type="ordered locus">CA_C3233</name>
</gene>
<accession>Q97E82</accession>
<evidence type="ECO:0000250" key="1"/>
<evidence type="ECO:0000305" key="2"/>
<evidence type="ECO:0007829" key="3">
    <source>
        <dbReference type="PDB" id="1VR0"/>
    </source>
</evidence>
<sequence length="235" mass="26144">MKIDLIISADDIKEEKVKNKTAVVIDMLRATSVITTALNNGCKRVVPVLTVEEALKKVKEYGKDAILGGERKGLKIEGFDFSNSPMEYTEDVVKGKTLIMTTTNGTRAIKGSETARDILIGSVLNGEAVAEKIVELNNDVVIVNAGTYGEFSIDDFICSGYIINCVMDRMKKLELTDAATTAQYVYKTNEDIKGFVKYAKHYKRIMELGLKKDFEYCCKKDIVKLVPQYTNGEIL</sequence>
<protein>
    <recommendedName>
        <fullName>Probable 2-phosphosulfolactate phosphatase</fullName>
        <ecNumber>3.1.3.71</ecNumber>
    </recommendedName>
</protein>
<proteinExistence type="evidence at protein level"/>
<name>COMB_CLOAB</name>